<proteinExistence type="inferred from homology"/>
<protein>
    <recommendedName>
        <fullName>Ubiquitin-like modifier-activating enzyme ATG7</fullName>
    </recommendedName>
    <alternativeName>
        <fullName>ATG12-activating enzyme E1 ATG7</fullName>
    </alternativeName>
    <alternativeName>
        <fullName>Autophagy-related protein 7</fullName>
    </alternativeName>
</protein>
<feature type="chain" id="PRO_0000212811" description="Ubiquitin-like modifier-activating enzyme ATG7">
    <location>
        <begin position="1"/>
        <end position="639"/>
    </location>
</feature>
<feature type="short sequence motif" description="GXGXXG motif">
    <location>
        <begin position="322"/>
        <end position="327"/>
    </location>
</feature>
<feature type="active site" description="Glycyl thioester intermediate" evidence="1">
    <location>
        <position position="502"/>
    </location>
</feature>
<accession>Q59PZ3</accession>
<accession>A0A1D8PTA1</accession>
<accession>Q59Q11</accession>
<keyword id="KW-0072">Autophagy</keyword>
<keyword id="KW-0963">Cytoplasm</keyword>
<keyword id="KW-0653">Protein transport</keyword>
<keyword id="KW-1185">Reference proteome</keyword>
<keyword id="KW-0813">Transport</keyword>
<keyword id="KW-0833">Ubl conjugation pathway</keyword>
<sequence>MSNHSDQIVKKYILNQSFVESSFFTKLSELKLEKYKLDSSYIAIHGFQTHPTKLNKFNDTPVLNLDQSSFDDTLNDSRINIPGELFNVNTIEEFKSLDKLKLLNTWGQNVYSEVTNATSFDYKLFNKFYILTYSDLKKYKFYYWVAYPTLSNTWTVESESQETDTTITQLVETELDNEYGQFFQYYGGKLHKSVQADKEHTFVFIDTCLSKDRKPSSQLKNYLYFIAYKGIKEIDLVTYRNNNLSFTQHLKLDAFTDSPKISGWERTNQGKLGPKLADLGSLINPLQLAEQAVELNLKLMKWRIAPDIDLEIIKKQKVLLLGAGTLGSYVARALLGWGVRSITFVDSGRISFSNPVRQPLFNFEDCFSDSGQGEYKALRAAENLKRVFPGVDAKGICLAVPMVGHPVTDEHKERENYETLVKLFEEHDVIFLLMDSRESRWLPTLIGAANEKIVINAALGFDSYLVMRHGVTNQKDRLGCYYCNDVVAPNDSLSDRTLDQMCTVTRPGGALMASSLAVELLVAILQHPERNLAPHDAETKFGNIPHQIRGFLHNFQQTKLFAPSYVHCSACSPRVITEFKQEGWEFVRKCLDDSQYLEDISGLTKVQQEAELAAKQLLEDLSLDDDVSNDIDEDSEWLS</sequence>
<dbReference type="EMBL" id="CP017630">
    <property type="protein sequence ID" value="AOW31370.1"/>
    <property type="molecule type" value="Genomic_DNA"/>
</dbReference>
<dbReference type="RefSeq" id="XP_711780.2">
    <property type="nucleotide sequence ID" value="XM_706688.2"/>
</dbReference>
<dbReference type="SMR" id="Q59PZ3"/>
<dbReference type="FunCoup" id="Q59PZ3">
    <property type="interactions" value="771"/>
</dbReference>
<dbReference type="STRING" id="237561.Q59PZ3"/>
<dbReference type="EnsemblFungi" id="CR_06730W_A-T">
    <property type="protein sequence ID" value="CR_06730W_A-T-p1"/>
    <property type="gene ID" value="CR_06730W_A"/>
</dbReference>
<dbReference type="GeneID" id="3646615"/>
<dbReference type="KEGG" id="cal:CAALFM_CR06730WA"/>
<dbReference type="CGD" id="CAL0000178896">
    <property type="gene designation" value="APG7"/>
</dbReference>
<dbReference type="VEuPathDB" id="FungiDB:CR_06730W_A"/>
<dbReference type="eggNOG" id="KOG2337">
    <property type="taxonomic scope" value="Eukaryota"/>
</dbReference>
<dbReference type="HOGENOM" id="CLU_012998_2_1_1"/>
<dbReference type="InParanoid" id="Q59PZ3"/>
<dbReference type="OMA" id="RQIWDAI"/>
<dbReference type="OrthoDB" id="338614at2759"/>
<dbReference type="PRO" id="PR:Q59PZ3"/>
<dbReference type="Proteomes" id="UP000000559">
    <property type="component" value="Chromosome R"/>
</dbReference>
<dbReference type="GO" id="GO:0005737">
    <property type="term" value="C:cytoplasm"/>
    <property type="evidence" value="ECO:0000318"/>
    <property type="project" value="GO_Central"/>
</dbReference>
<dbReference type="GO" id="GO:0005829">
    <property type="term" value="C:cytosol"/>
    <property type="evidence" value="ECO:0007669"/>
    <property type="project" value="EnsemblFungi"/>
</dbReference>
<dbReference type="GO" id="GO:0097632">
    <property type="term" value="C:extrinsic component of phagophore assembly site membrane"/>
    <property type="evidence" value="ECO:0007669"/>
    <property type="project" value="EnsemblFungi"/>
</dbReference>
<dbReference type="GO" id="GO:0000407">
    <property type="term" value="C:phagophore assembly site"/>
    <property type="evidence" value="ECO:0000318"/>
    <property type="project" value="GO_Central"/>
</dbReference>
<dbReference type="GO" id="GO:0019778">
    <property type="term" value="F:Atg12 activating enzyme activity"/>
    <property type="evidence" value="ECO:0000318"/>
    <property type="project" value="GO_Central"/>
</dbReference>
<dbReference type="GO" id="GO:0019779">
    <property type="term" value="F:Atg8 activating enzyme activity"/>
    <property type="evidence" value="ECO:0000318"/>
    <property type="project" value="GO_Central"/>
</dbReference>
<dbReference type="GO" id="GO:0042802">
    <property type="term" value="F:identical protein binding"/>
    <property type="evidence" value="ECO:0007669"/>
    <property type="project" value="EnsemblFungi"/>
</dbReference>
<dbReference type="GO" id="GO:0000045">
    <property type="term" value="P:autophagosome assembly"/>
    <property type="evidence" value="ECO:0000318"/>
    <property type="project" value="GO_Central"/>
</dbReference>
<dbReference type="GO" id="GO:0006995">
    <property type="term" value="P:cellular response to nitrogen starvation"/>
    <property type="evidence" value="ECO:0000318"/>
    <property type="project" value="GO_Central"/>
</dbReference>
<dbReference type="GO" id="GO:0032258">
    <property type="term" value="P:cytoplasm to vacuole targeting by the Cvt pathway"/>
    <property type="evidence" value="ECO:0007669"/>
    <property type="project" value="EnsemblFungi"/>
</dbReference>
<dbReference type="GO" id="GO:0000423">
    <property type="term" value="P:mitophagy"/>
    <property type="evidence" value="ECO:0000318"/>
    <property type="project" value="GO_Central"/>
</dbReference>
<dbReference type="GO" id="GO:0034727">
    <property type="term" value="P:piecemeal microautophagy of the nucleus"/>
    <property type="evidence" value="ECO:0000318"/>
    <property type="project" value="GO_Central"/>
</dbReference>
<dbReference type="GO" id="GO:0032446">
    <property type="term" value="P:protein modification by small protein conjugation"/>
    <property type="evidence" value="ECO:0000318"/>
    <property type="project" value="GO_Central"/>
</dbReference>
<dbReference type="FunFam" id="3.40.50.720:FF:000243">
    <property type="entry name" value="Ubiquitin-like modifier-activating enzyme ATG7"/>
    <property type="match status" value="1"/>
</dbReference>
<dbReference type="Gene3D" id="3.40.50.720">
    <property type="entry name" value="NAD(P)-binding Rossmann-like Domain"/>
    <property type="match status" value="1"/>
</dbReference>
<dbReference type="Gene3D" id="3.40.140.100">
    <property type="entry name" value="Ubiquitin-like modifier-activating enzyme ATG7 C-terminal domain"/>
    <property type="match status" value="1"/>
</dbReference>
<dbReference type="Gene3D" id="3.40.140.70">
    <property type="entry name" value="Ubiquitin-like modifier-activating enzyme ATG7 N-terminal domain"/>
    <property type="match status" value="1"/>
</dbReference>
<dbReference type="InterPro" id="IPR006285">
    <property type="entry name" value="Atg7"/>
</dbReference>
<dbReference type="InterPro" id="IPR032197">
    <property type="entry name" value="Atg7_N"/>
</dbReference>
<dbReference type="InterPro" id="IPR042522">
    <property type="entry name" value="Atg7_N_1"/>
</dbReference>
<dbReference type="InterPro" id="IPR042523">
    <property type="entry name" value="Atg7_N_2"/>
</dbReference>
<dbReference type="InterPro" id="IPR045886">
    <property type="entry name" value="ThiF/MoeB/HesA"/>
</dbReference>
<dbReference type="InterPro" id="IPR000594">
    <property type="entry name" value="ThiF_NAD_FAD-bd"/>
</dbReference>
<dbReference type="InterPro" id="IPR035985">
    <property type="entry name" value="Ubiquitin-activating_enz"/>
</dbReference>
<dbReference type="NCBIfam" id="TIGR01381">
    <property type="entry name" value="E1_like_apg7"/>
    <property type="match status" value="1"/>
</dbReference>
<dbReference type="PANTHER" id="PTHR10953">
    <property type="entry name" value="UBIQUITIN-ACTIVATING ENZYME E1"/>
    <property type="match status" value="1"/>
</dbReference>
<dbReference type="PANTHER" id="PTHR10953:SF3">
    <property type="entry name" value="UBIQUITIN-LIKE MODIFIER-ACTIVATING ENZYME ATG7"/>
    <property type="match status" value="1"/>
</dbReference>
<dbReference type="Pfam" id="PF16420">
    <property type="entry name" value="ATG7_N"/>
    <property type="match status" value="1"/>
</dbReference>
<dbReference type="Pfam" id="PF00899">
    <property type="entry name" value="ThiF"/>
    <property type="match status" value="1"/>
</dbReference>
<dbReference type="SUPFAM" id="SSF69572">
    <property type="entry name" value="Activating enzymes of the ubiquitin-like proteins"/>
    <property type="match status" value="1"/>
</dbReference>
<organism>
    <name type="scientific">Candida albicans (strain SC5314 / ATCC MYA-2876)</name>
    <name type="common">Yeast</name>
    <dbReference type="NCBI Taxonomy" id="237561"/>
    <lineage>
        <taxon>Eukaryota</taxon>
        <taxon>Fungi</taxon>
        <taxon>Dikarya</taxon>
        <taxon>Ascomycota</taxon>
        <taxon>Saccharomycotina</taxon>
        <taxon>Pichiomycetes</taxon>
        <taxon>Debaryomycetaceae</taxon>
        <taxon>Candida/Lodderomyces clade</taxon>
        <taxon>Candida</taxon>
    </lineage>
</organism>
<name>ATG7_CANAL</name>
<reference key="1">
    <citation type="journal article" date="2004" name="Proc. Natl. Acad. Sci. U.S.A.">
        <title>The diploid genome sequence of Candida albicans.</title>
        <authorList>
            <person name="Jones T."/>
            <person name="Federspiel N.A."/>
            <person name="Chibana H."/>
            <person name="Dungan J."/>
            <person name="Kalman S."/>
            <person name="Magee B.B."/>
            <person name="Newport G."/>
            <person name="Thorstenson Y.R."/>
            <person name="Agabian N."/>
            <person name="Magee P.T."/>
            <person name="Davis R.W."/>
            <person name="Scherer S."/>
        </authorList>
    </citation>
    <scope>NUCLEOTIDE SEQUENCE [LARGE SCALE GENOMIC DNA]</scope>
    <source>
        <strain>SC5314 / ATCC MYA-2876</strain>
    </source>
</reference>
<reference key="2">
    <citation type="journal article" date="2007" name="Genome Biol.">
        <title>Assembly of the Candida albicans genome into sixteen supercontigs aligned on the eight chromosomes.</title>
        <authorList>
            <person name="van het Hoog M."/>
            <person name="Rast T.J."/>
            <person name="Martchenko M."/>
            <person name="Grindle S."/>
            <person name="Dignard D."/>
            <person name="Hogues H."/>
            <person name="Cuomo C."/>
            <person name="Berriman M."/>
            <person name="Scherer S."/>
            <person name="Magee B.B."/>
            <person name="Whiteway M."/>
            <person name="Chibana H."/>
            <person name="Nantel A."/>
            <person name="Magee P.T."/>
        </authorList>
    </citation>
    <scope>GENOME REANNOTATION</scope>
    <source>
        <strain>SC5314 / ATCC MYA-2876</strain>
    </source>
</reference>
<reference key="3">
    <citation type="journal article" date="2013" name="Genome Biol.">
        <title>Assembly of a phased diploid Candida albicans genome facilitates allele-specific measurements and provides a simple model for repeat and indel structure.</title>
        <authorList>
            <person name="Muzzey D."/>
            <person name="Schwartz K."/>
            <person name="Weissman J.S."/>
            <person name="Sherlock G."/>
        </authorList>
    </citation>
    <scope>NUCLEOTIDE SEQUENCE [LARGE SCALE GENOMIC DNA]</scope>
    <scope>GENOME REANNOTATION</scope>
    <source>
        <strain>SC5314 / ATCC MYA-2876</strain>
    </source>
</reference>
<comment type="function">
    <text evidence="1">E1-like activating enzyme involved in the 2 ubiquitin-like systems required for cytoplasm to vacuole transport (Cvt) and autophagy. Activates ATG12 for its conjugation with ATG5 and ATG8 for its conjugation with phosphatidylethanolamine. Both systems are needed for the ATG8 association to Cvt vesicles and autophagosomes membranes. Autophagy is essential for maintenance of amino acid levels and protein synthesis under nitrogen starvation. Required for selective autophagic degradation of the nucleus (nucleophagy) as well as for mitophagy which contributes to regulate mitochondrial quantity and quality by eliminating the mitochondria to a basal level to fulfill cellular energy requirements and preventing excess ROS production. Plays a role in the regulation of filamentous growth and chronological longevity (By similarity).</text>
</comment>
<comment type="subunit">
    <text evidence="1">Homodimer.</text>
</comment>
<comment type="subcellular location">
    <subcellularLocation>
        <location evidence="1">Cytoplasm</location>
    </subcellularLocation>
    <subcellularLocation>
        <location evidence="1">Preautophagosomal structure</location>
    </subcellularLocation>
</comment>
<comment type="domain">
    <text evidence="1">The GxGxxG motif is important for the function, possibly through binding with ATP.</text>
</comment>
<comment type="similarity">
    <text evidence="2">Belongs to the ATG7 family.</text>
</comment>
<evidence type="ECO:0000250" key="1"/>
<evidence type="ECO:0000305" key="2"/>
<gene>
    <name type="primary">APG7</name>
    <name type="synonym">ATG7</name>
    <name type="ordered locus">CAALFM_CR06730WA</name>
    <name type="ORF">CaO19.707</name>
    <name type="ORF">CaO19.8326</name>
</gene>